<gene>
    <name type="primary">msh3</name>
    <name type="ORF">An13g01060</name>
</gene>
<dbReference type="EMBL" id="AM270298">
    <property type="protein sequence ID" value="CAK41506.1"/>
    <property type="status" value="ALT_SEQ"/>
    <property type="molecule type" value="Genomic_DNA"/>
</dbReference>
<dbReference type="SMR" id="A2R1F6"/>
<dbReference type="EnsemblFungi" id="CAK41506">
    <property type="protein sequence ID" value="CAK41506"/>
    <property type="gene ID" value="An13g01060"/>
</dbReference>
<dbReference type="Proteomes" id="UP000006706">
    <property type="component" value="Chromosome 2L"/>
</dbReference>
<dbReference type="GO" id="GO:0005634">
    <property type="term" value="C:nucleus"/>
    <property type="evidence" value="ECO:0007669"/>
    <property type="project" value="UniProtKB-SubCell"/>
</dbReference>
<dbReference type="GO" id="GO:0005524">
    <property type="term" value="F:ATP binding"/>
    <property type="evidence" value="ECO:0007669"/>
    <property type="project" value="UniProtKB-KW"/>
</dbReference>
<dbReference type="GO" id="GO:0140664">
    <property type="term" value="F:ATP-dependent DNA damage sensor activity"/>
    <property type="evidence" value="ECO:0007669"/>
    <property type="project" value="InterPro"/>
</dbReference>
<dbReference type="GO" id="GO:0030983">
    <property type="term" value="F:mismatched DNA binding"/>
    <property type="evidence" value="ECO:0007669"/>
    <property type="project" value="InterPro"/>
</dbReference>
<dbReference type="GO" id="GO:0006298">
    <property type="term" value="P:mismatch repair"/>
    <property type="evidence" value="ECO:0007669"/>
    <property type="project" value="InterPro"/>
</dbReference>
<dbReference type="GO" id="GO:0006312">
    <property type="term" value="P:mitotic recombination"/>
    <property type="evidence" value="ECO:0007669"/>
    <property type="project" value="TreeGrafter"/>
</dbReference>
<dbReference type="FunFam" id="3.30.420.110:FF:000008">
    <property type="entry name" value="DNA mismatch repair protein"/>
    <property type="match status" value="1"/>
</dbReference>
<dbReference type="FunFam" id="3.40.1170.10:FF:000006">
    <property type="entry name" value="DNA mismatch repair protein"/>
    <property type="match status" value="1"/>
</dbReference>
<dbReference type="FunFam" id="1.10.1420.10:FF:000004">
    <property type="entry name" value="DNA mismatch repair protein Msh3"/>
    <property type="match status" value="1"/>
</dbReference>
<dbReference type="FunFam" id="3.40.50.300:FF:001909">
    <property type="entry name" value="DNA mismatch repair protein msh3"/>
    <property type="match status" value="1"/>
</dbReference>
<dbReference type="Gene3D" id="1.10.1420.10">
    <property type="match status" value="2"/>
</dbReference>
<dbReference type="Gene3D" id="3.40.1170.10">
    <property type="entry name" value="DNA repair protein MutS, domain I"/>
    <property type="match status" value="1"/>
</dbReference>
<dbReference type="Gene3D" id="3.30.420.110">
    <property type="entry name" value="MutS, connector domain"/>
    <property type="match status" value="1"/>
</dbReference>
<dbReference type="Gene3D" id="3.40.50.300">
    <property type="entry name" value="P-loop containing nucleotide triphosphate hydrolases"/>
    <property type="match status" value="1"/>
</dbReference>
<dbReference type="InterPro" id="IPR007695">
    <property type="entry name" value="DNA_mismatch_repair_MutS-lik_N"/>
</dbReference>
<dbReference type="InterPro" id="IPR017261">
    <property type="entry name" value="DNA_mismatch_repair_MutS/MSH"/>
</dbReference>
<dbReference type="InterPro" id="IPR000432">
    <property type="entry name" value="DNA_mismatch_repair_MutS_C"/>
</dbReference>
<dbReference type="InterPro" id="IPR007861">
    <property type="entry name" value="DNA_mismatch_repair_MutS_clamp"/>
</dbReference>
<dbReference type="InterPro" id="IPR007696">
    <property type="entry name" value="DNA_mismatch_repair_MutS_core"/>
</dbReference>
<dbReference type="InterPro" id="IPR016151">
    <property type="entry name" value="DNA_mismatch_repair_MutS_N"/>
</dbReference>
<dbReference type="InterPro" id="IPR036187">
    <property type="entry name" value="DNA_mismatch_repair_MutS_sf"/>
</dbReference>
<dbReference type="InterPro" id="IPR007860">
    <property type="entry name" value="DNA_mmatch_repair_MutS_con_dom"/>
</dbReference>
<dbReference type="InterPro" id="IPR045076">
    <property type="entry name" value="MutS"/>
</dbReference>
<dbReference type="InterPro" id="IPR036678">
    <property type="entry name" value="MutS_con_dom_sf"/>
</dbReference>
<dbReference type="InterPro" id="IPR027417">
    <property type="entry name" value="P-loop_NTPase"/>
</dbReference>
<dbReference type="NCBIfam" id="NF003810">
    <property type="entry name" value="PRK05399.1"/>
    <property type="match status" value="1"/>
</dbReference>
<dbReference type="PANTHER" id="PTHR11361:SF122">
    <property type="entry name" value="DNA MISMATCH REPAIR PROTEIN MSH3"/>
    <property type="match status" value="1"/>
</dbReference>
<dbReference type="PANTHER" id="PTHR11361">
    <property type="entry name" value="DNA MISMATCH REPAIR PROTEIN MUTS FAMILY MEMBER"/>
    <property type="match status" value="1"/>
</dbReference>
<dbReference type="Pfam" id="PF01624">
    <property type="entry name" value="MutS_I"/>
    <property type="match status" value="1"/>
</dbReference>
<dbReference type="Pfam" id="PF05188">
    <property type="entry name" value="MutS_II"/>
    <property type="match status" value="1"/>
</dbReference>
<dbReference type="Pfam" id="PF05192">
    <property type="entry name" value="MutS_III"/>
    <property type="match status" value="1"/>
</dbReference>
<dbReference type="Pfam" id="PF05190">
    <property type="entry name" value="MutS_IV"/>
    <property type="match status" value="1"/>
</dbReference>
<dbReference type="Pfam" id="PF00488">
    <property type="entry name" value="MutS_V"/>
    <property type="match status" value="1"/>
</dbReference>
<dbReference type="PIRSF" id="PIRSF037677">
    <property type="entry name" value="DNA_mis_repair_Msh6"/>
    <property type="match status" value="1"/>
</dbReference>
<dbReference type="SMART" id="SM00534">
    <property type="entry name" value="MUTSac"/>
    <property type="match status" value="1"/>
</dbReference>
<dbReference type="SMART" id="SM00533">
    <property type="entry name" value="MUTSd"/>
    <property type="match status" value="1"/>
</dbReference>
<dbReference type="SUPFAM" id="SSF55271">
    <property type="entry name" value="DNA repair protein MutS, domain I"/>
    <property type="match status" value="1"/>
</dbReference>
<dbReference type="SUPFAM" id="SSF48334">
    <property type="entry name" value="DNA repair protein MutS, domain III"/>
    <property type="match status" value="1"/>
</dbReference>
<dbReference type="SUPFAM" id="SSF52540">
    <property type="entry name" value="P-loop containing nucleoside triphosphate hydrolases"/>
    <property type="match status" value="1"/>
</dbReference>
<dbReference type="PROSITE" id="PS00486">
    <property type="entry name" value="DNA_MISMATCH_REPAIR_2"/>
    <property type="match status" value="1"/>
</dbReference>
<keyword id="KW-0067">ATP-binding</keyword>
<keyword id="KW-0227">DNA damage</keyword>
<keyword id="KW-0234">DNA repair</keyword>
<keyword id="KW-0238">DNA-binding</keyword>
<keyword id="KW-0547">Nucleotide-binding</keyword>
<keyword id="KW-0539">Nucleus</keyword>
<keyword id="KW-1185">Reference proteome</keyword>
<reference key="1">
    <citation type="journal article" date="2007" name="Nat. Biotechnol.">
        <title>Genome sequencing and analysis of the versatile cell factory Aspergillus niger CBS 513.88.</title>
        <authorList>
            <person name="Pel H.J."/>
            <person name="de Winde J.H."/>
            <person name="Archer D.B."/>
            <person name="Dyer P.S."/>
            <person name="Hofmann G."/>
            <person name="Schaap P.J."/>
            <person name="Turner G."/>
            <person name="de Vries R.P."/>
            <person name="Albang R."/>
            <person name="Albermann K."/>
            <person name="Andersen M.R."/>
            <person name="Bendtsen J.D."/>
            <person name="Benen J.A.E."/>
            <person name="van den Berg M."/>
            <person name="Breestraat S."/>
            <person name="Caddick M.X."/>
            <person name="Contreras R."/>
            <person name="Cornell M."/>
            <person name="Coutinho P.M."/>
            <person name="Danchin E.G.J."/>
            <person name="Debets A.J.M."/>
            <person name="Dekker P."/>
            <person name="van Dijck P.W.M."/>
            <person name="van Dijk A."/>
            <person name="Dijkhuizen L."/>
            <person name="Driessen A.J.M."/>
            <person name="d'Enfert C."/>
            <person name="Geysens S."/>
            <person name="Goosen C."/>
            <person name="Groot G.S.P."/>
            <person name="de Groot P.W.J."/>
            <person name="Guillemette T."/>
            <person name="Henrissat B."/>
            <person name="Herweijer M."/>
            <person name="van den Hombergh J.P.T.W."/>
            <person name="van den Hondel C.A.M.J.J."/>
            <person name="van der Heijden R.T.J.M."/>
            <person name="van der Kaaij R.M."/>
            <person name="Klis F.M."/>
            <person name="Kools H.J."/>
            <person name="Kubicek C.P."/>
            <person name="van Kuyk P.A."/>
            <person name="Lauber J."/>
            <person name="Lu X."/>
            <person name="van der Maarel M.J.E.C."/>
            <person name="Meulenberg R."/>
            <person name="Menke H."/>
            <person name="Mortimer M.A."/>
            <person name="Nielsen J."/>
            <person name="Oliver S.G."/>
            <person name="Olsthoorn M."/>
            <person name="Pal K."/>
            <person name="van Peij N.N.M.E."/>
            <person name="Ram A.F.J."/>
            <person name="Rinas U."/>
            <person name="Roubos J.A."/>
            <person name="Sagt C.M.J."/>
            <person name="Schmoll M."/>
            <person name="Sun J."/>
            <person name="Ussery D."/>
            <person name="Varga J."/>
            <person name="Vervecken W."/>
            <person name="van de Vondervoort P.J.J."/>
            <person name="Wedler H."/>
            <person name="Woesten H.A.B."/>
            <person name="Zeng A.-P."/>
            <person name="van Ooyen A.J.J."/>
            <person name="Visser J."/>
            <person name="Stam H."/>
        </authorList>
    </citation>
    <scope>NUCLEOTIDE SEQUENCE [LARGE SCALE GENOMIC DNA]</scope>
    <source>
        <strain>ATCC MYA-4892 / CBS 513.88 / FGSC A1513</strain>
    </source>
</reference>
<name>MSH3_ASPNC</name>
<sequence length="1119" mass="123133">MPLPSSQNSSSPGVKRKQSTLASFFTKKPQTAQQASVNVVEEKSPAATFDKADNQERAAKKDKALTDDEEDDIVAPAPKRVRTNGLYPASREEIPNSTSTTERPPALTSSQRTERFKFSSSPAVNTGVEGSQAAVELEAGQRQKEREELHHKFVRKLGGADCLIGIGRNAISEATPEEGAEPEDEEEAAPPPPAKGKAAAKKGGSKLTPMEKQVIDIKRKHMDTVLVVEVGYKFRFFGEDARVAAKELSIVCIPGKLRFDEHPSEASHLDRFASASIPVHRLHVHVKRLVAAGHKVGVVRQIETAALKAAGDNRNAPFVRKLTNLYTKGTYIDDAEGLGGPMPAASGGASPATGYLLCITETNAKGWGNDEKVQVGIVAVQPATGDIVYDDFEDGFMRSEIETRLLHIAPCELLIVGELSKATEKLVQHLSGSKLNVFGDKTRVERVLKSKTAAAESHSHVSSFYAGKMKTASAADDAQASSLLQKVLNLPEQVTICLSSMIEHMKEYGLEYVFELTKYFQHFSSRSHMLLNGNTLMSLEIYQNQTDHTTKGSLFWTLDRTQTRFGQRMLRKWVGRPLLDKSRLEERVNAVEELKNPEKTVMVERLKGLLGKVKSDLEKSLIRIYYGKCTRPELLTVLQTMQMIAQEFSDVKSPADTGFASTAINEAITCLPTILEDVVAFLDKINMHAAKSDDKYAFFREAEETEDISDQKLGIASVEHELEEHRSVAGQKLGKKTVEYKSVAGIDYLIEVENSSASIKRVPASWVKVSGTKKVSRFHTPEVIQLMRQRDQHKEALAAACDQAFISLLADIATKYQPFRDSVQALATLDCLIALATIASQPGYVKPEYTDHTCIQVDQGRHPMVEQLLLDSYVPNDIDLDSDKTRALLVTGPNMGGKSSYVRQVALIAIMGQIGSYVPAQSAKLGMLDAVFTRMGAFDNMLAGESTFMVELSETADILKQATPRSLVILDELGRGTSTHDGVAIAQAVLDYMVRSIRSLTLFITHYQHLSSMVHSFADQELRNVHMRFTESGTGTDEEITFLYEVGEGVAHRSYGLNVARLANLPGALLDQARQKSKELEEKIRRRKLAGLVTAVGEVIEGSKDENMIERLISSAEQL</sequence>
<accession>A2R1F6</accession>
<comment type="function">
    <text evidence="1">Component of the post-replicative DNA mismatch repair system (MMR). Heterodimerizes with msh2 to form MutS beta, which binds to DNA mismatches thereby initiating DNA repair. Msh3 provides substrate-binding and substrate specificity to the complex. When bound, the MutS beta heterodimer bends the DNA helix and shields approximately 20 base pairs. Acts mainly to repair insertion-deletion loops (IDLs) from 2 to 13 nucleotides in size, but can also repair base-base and single insertion-deletion mismatches that occur during replication. After mismatch binding, forms a ternary complex with the MutL alpha heterodimer, which is thought to be responsible for directing the downstream MMR events, including strand discrimination, excision, and resynthesis. ATP binding and hydrolysis play a pivotal role in mismatch repair functions (By similarity).</text>
</comment>
<comment type="subunit">
    <text evidence="1">Heterodimer consisting of msh2-msh3 (MutS beta). Forms a ternary complex with MutL alpha (mlh1-pms1) (By similarity).</text>
</comment>
<comment type="subcellular location">
    <subcellularLocation>
        <location evidence="1">Nucleus</location>
    </subcellularLocation>
</comment>
<comment type="similarity">
    <text evidence="4">Belongs to the DNA mismatch repair MutS family. MSH3 subfamily.</text>
</comment>
<comment type="sequence caution" evidence="4">
    <conflict type="erroneous gene model prediction">
        <sequence resource="EMBL-CDS" id="CAK41506"/>
    </conflict>
</comment>
<protein>
    <recommendedName>
        <fullName>DNA mismatch repair protein msh3</fullName>
    </recommendedName>
    <alternativeName>
        <fullName>MutS protein homolog 3</fullName>
    </alternativeName>
</protein>
<feature type="chain" id="PRO_0000338511" description="DNA mismatch repair protein msh3">
    <location>
        <begin position="1"/>
        <end position="1119"/>
    </location>
</feature>
<feature type="region of interest" description="Disordered" evidence="3">
    <location>
        <begin position="1"/>
        <end position="20"/>
    </location>
</feature>
<feature type="region of interest" description="Disordered" evidence="3">
    <location>
        <begin position="25"/>
        <end position="143"/>
    </location>
</feature>
<feature type="region of interest" description="Disordered" evidence="3">
    <location>
        <begin position="174"/>
        <end position="207"/>
    </location>
</feature>
<feature type="region of interest" description="Mispair-binding domain" evidence="1">
    <location>
        <begin position="201"/>
        <end position="329"/>
    </location>
</feature>
<feature type="compositionally biased region" description="Polar residues" evidence="3">
    <location>
        <begin position="1"/>
        <end position="12"/>
    </location>
</feature>
<feature type="compositionally biased region" description="Polar residues" evidence="3">
    <location>
        <begin position="25"/>
        <end position="37"/>
    </location>
</feature>
<feature type="compositionally biased region" description="Basic and acidic residues" evidence="3">
    <location>
        <begin position="40"/>
        <end position="66"/>
    </location>
</feature>
<feature type="compositionally biased region" description="Polar residues" evidence="3">
    <location>
        <begin position="95"/>
        <end position="111"/>
    </location>
</feature>
<feature type="compositionally biased region" description="Acidic residues" evidence="3">
    <location>
        <begin position="175"/>
        <end position="188"/>
    </location>
</feature>
<feature type="binding site" evidence="2">
    <location>
        <begin position="892"/>
        <end position="899"/>
    </location>
    <ligand>
        <name>ATP</name>
        <dbReference type="ChEBI" id="CHEBI:30616"/>
    </ligand>
</feature>
<organism>
    <name type="scientific">Aspergillus niger (strain ATCC MYA-4892 / CBS 513.88 / FGSC A1513)</name>
    <dbReference type="NCBI Taxonomy" id="425011"/>
    <lineage>
        <taxon>Eukaryota</taxon>
        <taxon>Fungi</taxon>
        <taxon>Dikarya</taxon>
        <taxon>Ascomycota</taxon>
        <taxon>Pezizomycotina</taxon>
        <taxon>Eurotiomycetes</taxon>
        <taxon>Eurotiomycetidae</taxon>
        <taxon>Eurotiales</taxon>
        <taxon>Aspergillaceae</taxon>
        <taxon>Aspergillus</taxon>
        <taxon>Aspergillus subgen. Circumdati</taxon>
    </lineage>
</organism>
<proteinExistence type="inferred from homology"/>
<evidence type="ECO:0000250" key="1"/>
<evidence type="ECO:0000255" key="2"/>
<evidence type="ECO:0000256" key="3">
    <source>
        <dbReference type="SAM" id="MobiDB-lite"/>
    </source>
</evidence>
<evidence type="ECO:0000305" key="4"/>